<comment type="function">
    <text evidence="1">Catalyzes the transfer of a phosphate group to glutamate to form L-glutamate 5-phosphate.</text>
</comment>
<comment type="catalytic activity">
    <reaction evidence="1">
        <text>L-glutamate + ATP = L-glutamyl 5-phosphate + ADP</text>
        <dbReference type="Rhea" id="RHEA:14877"/>
        <dbReference type="ChEBI" id="CHEBI:29985"/>
        <dbReference type="ChEBI" id="CHEBI:30616"/>
        <dbReference type="ChEBI" id="CHEBI:58274"/>
        <dbReference type="ChEBI" id="CHEBI:456216"/>
        <dbReference type="EC" id="2.7.2.11"/>
    </reaction>
</comment>
<comment type="pathway">
    <text evidence="1">Amino-acid biosynthesis; L-proline biosynthesis; L-glutamate 5-semialdehyde from L-glutamate: step 1/2.</text>
</comment>
<comment type="subcellular location">
    <subcellularLocation>
        <location evidence="1">Cytoplasm</location>
    </subcellularLocation>
</comment>
<comment type="similarity">
    <text evidence="1">Belongs to the glutamate 5-kinase family.</text>
</comment>
<evidence type="ECO:0000255" key="1">
    <source>
        <dbReference type="HAMAP-Rule" id="MF_00456"/>
    </source>
</evidence>
<name>PROB_SALSV</name>
<protein>
    <recommendedName>
        <fullName evidence="1">Glutamate 5-kinase</fullName>
        <ecNumber evidence="1">2.7.2.11</ecNumber>
    </recommendedName>
    <alternativeName>
        <fullName evidence="1">Gamma-glutamyl kinase</fullName>
        <shortName evidence="1">GK</shortName>
    </alternativeName>
</protein>
<organism>
    <name type="scientific">Salmonella schwarzengrund (strain CVM19633)</name>
    <dbReference type="NCBI Taxonomy" id="439843"/>
    <lineage>
        <taxon>Bacteria</taxon>
        <taxon>Pseudomonadati</taxon>
        <taxon>Pseudomonadota</taxon>
        <taxon>Gammaproteobacteria</taxon>
        <taxon>Enterobacterales</taxon>
        <taxon>Enterobacteriaceae</taxon>
        <taxon>Salmonella</taxon>
    </lineage>
</organism>
<sequence>MSDSQTLVVKLGTSVLTGGSRRLNRAHIVELVRQCAQLHAAGHRIVIVTSGAIAAGREHLGYPELPATIASKQLLAAVGQSRLIQLWEQLFSIYGIHIGQMLLTRADMEDRERFLNARDTLRALLDNHIVPVINENDAVATAEIKVGDNDNLSALAAILAGADKLLLLTDQQGLFTADPRSNPQAELIKDVYGVDDALRSIAGDSVSGLGTGGMSTKLQAADVACRAGIDTIIASGSKPGVIGDVMEGISVGTRFHAQASPLENRKRWIFGAPPAGEITVDEGATAAMLERGSSLLPKGIKSVTGNFSRGEVIRICNLQGRDIAHGVSRYNSDALRRIAGHHSQQIDAILGYEYGPVAVHRDDMITR</sequence>
<proteinExistence type="inferred from homology"/>
<gene>
    <name evidence="1" type="primary">proB</name>
    <name type="ordered locus">SeSA_A0371</name>
</gene>
<dbReference type="EC" id="2.7.2.11" evidence="1"/>
<dbReference type="EMBL" id="CP001127">
    <property type="protein sequence ID" value="ACF92046.1"/>
    <property type="molecule type" value="Genomic_DNA"/>
</dbReference>
<dbReference type="RefSeq" id="WP_001285275.1">
    <property type="nucleotide sequence ID" value="NC_011094.1"/>
</dbReference>
<dbReference type="SMR" id="B4TZ90"/>
<dbReference type="KEGG" id="sew:SeSA_A0371"/>
<dbReference type="HOGENOM" id="CLU_025400_2_0_6"/>
<dbReference type="UniPathway" id="UPA00098">
    <property type="reaction ID" value="UER00359"/>
</dbReference>
<dbReference type="Proteomes" id="UP000001865">
    <property type="component" value="Chromosome"/>
</dbReference>
<dbReference type="GO" id="GO:0005829">
    <property type="term" value="C:cytosol"/>
    <property type="evidence" value="ECO:0007669"/>
    <property type="project" value="TreeGrafter"/>
</dbReference>
<dbReference type="GO" id="GO:0005524">
    <property type="term" value="F:ATP binding"/>
    <property type="evidence" value="ECO:0007669"/>
    <property type="project" value="UniProtKB-KW"/>
</dbReference>
<dbReference type="GO" id="GO:0004349">
    <property type="term" value="F:glutamate 5-kinase activity"/>
    <property type="evidence" value="ECO:0007669"/>
    <property type="project" value="UniProtKB-UniRule"/>
</dbReference>
<dbReference type="GO" id="GO:0003723">
    <property type="term" value="F:RNA binding"/>
    <property type="evidence" value="ECO:0007669"/>
    <property type="project" value="InterPro"/>
</dbReference>
<dbReference type="GO" id="GO:0055129">
    <property type="term" value="P:L-proline biosynthetic process"/>
    <property type="evidence" value="ECO:0007669"/>
    <property type="project" value="UniProtKB-UniRule"/>
</dbReference>
<dbReference type="CDD" id="cd04242">
    <property type="entry name" value="AAK_G5K_ProB"/>
    <property type="match status" value="1"/>
</dbReference>
<dbReference type="CDD" id="cd21157">
    <property type="entry name" value="PUA_G5K"/>
    <property type="match status" value="1"/>
</dbReference>
<dbReference type="FunFam" id="2.30.130.10:FF:000003">
    <property type="entry name" value="Glutamate 5-kinase"/>
    <property type="match status" value="1"/>
</dbReference>
<dbReference type="FunFam" id="3.40.1160.10:FF:000006">
    <property type="entry name" value="Glutamate 5-kinase"/>
    <property type="match status" value="1"/>
</dbReference>
<dbReference type="Gene3D" id="3.40.1160.10">
    <property type="entry name" value="Acetylglutamate kinase-like"/>
    <property type="match status" value="2"/>
</dbReference>
<dbReference type="Gene3D" id="2.30.130.10">
    <property type="entry name" value="PUA domain"/>
    <property type="match status" value="1"/>
</dbReference>
<dbReference type="HAMAP" id="MF_00456">
    <property type="entry name" value="ProB"/>
    <property type="match status" value="1"/>
</dbReference>
<dbReference type="InterPro" id="IPR036393">
    <property type="entry name" value="AceGlu_kinase-like_sf"/>
</dbReference>
<dbReference type="InterPro" id="IPR001048">
    <property type="entry name" value="Asp/Glu/Uridylate_kinase"/>
</dbReference>
<dbReference type="InterPro" id="IPR041739">
    <property type="entry name" value="G5K_ProB"/>
</dbReference>
<dbReference type="InterPro" id="IPR001057">
    <property type="entry name" value="Glu/AcGlu_kinase"/>
</dbReference>
<dbReference type="InterPro" id="IPR011529">
    <property type="entry name" value="Glu_5kinase"/>
</dbReference>
<dbReference type="InterPro" id="IPR005715">
    <property type="entry name" value="Glu_5kinase/COase_Synthase"/>
</dbReference>
<dbReference type="InterPro" id="IPR019797">
    <property type="entry name" value="Glutamate_5-kinase_CS"/>
</dbReference>
<dbReference type="InterPro" id="IPR002478">
    <property type="entry name" value="PUA"/>
</dbReference>
<dbReference type="InterPro" id="IPR015947">
    <property type="entry name" value="PUA-like_sf"/>
</dbReference>
<dbReference type="InterPro" id="IPR036974">
    <property type="entry name" value="PUA_sf"/>
</dbReference>
<dbReference type="NCBIfam" id="TIGR01027">
    <property type="entry name" value="proB"/>
    <property type="match status" value="1"/>
</dbReference>
<dbReference type="PANTHER" id="PTHR43654">
    <property type="entry name" value="GLUTAMATE 5-KINASE"/>
    <property type="match status" value="1"/>
</dbReference>
<dbReference type="PANTHER" id="PTHR43654:SF1">
    <property type="entry name" value="ISOPENTENYL PHOSPHATE KINASE"/>
    <property type="match status" value="1"/>
</dbReference>
<dbReference type="Pfam" id="PF00696">
    <property type="entry name" value="AA_kinase"/>
    <property type="match status" value="1"/>
</dbReference>
<dbReference type="Pfam" id="PF01472">
    <property type="entry name" value="PUA"/>
    <property type="match status" value="1"/>
</dbReference>
<dbReference type="PIRSF" id="PIRSF000729">
    <property type="entry name" value="GK"/>
    <property type="match status" value="1"/>
</dbReference>
<dbReference type="PRINTS" id="PR00474">
    <property type="entry name" value="GLU5KINASE"/>
</dbReference>
<dbReference type="SMART" id="SM00359">
    <property type="entry name" value="PUA"/>
    <property type="match status" value="1"/>
</dbReference>
<dbReference type="SUPFAM" id="SSF53633">
    <property type="entry name" value="Carbamate kinase-like"/>
    <property type="match status" value="1"/>
</dbReference>
<dbReference type="SUPFAM" id="SSF88697">
    <property type="entry name" value="PUA domain-like"/>
    <property type="match status" value="1"/>
</dbReference>
<dbReference type="PROSITE" id="PS00902">
    <property type="entry name" value="GLUTAMATE_5_KINASE"/>
    <property type="match status" value="1"/>
</dbReference>
<dbReference type="PROSITE" id="PS50890">
    <property type="entry name" value="PUA"/>
    <property type="match status" value="1"/>
</dbReference>
<accession>B4TZ90</accession>
<feature type="chain" id="PRO_1000125262" description="Glutamate 5-kinase">
    <location>
        <begin position="1"/>
        <end position="367"/>
    </location>
</feature>
<feature type="domain" description="PUA" evidence="1">
    <location>
        <begin position="275"/>
        <end position="353"/>
    </location>
</feature>
<feature type="binding site" evidence="1">
    <location>
        <position position="10"/>
    </location>
    <ligand>
        <name>ATP</name>
        <dbReference type="ChEBI" id="CHEBI:30616"/>
    </ligand>
</feature>
<feature type="binding site" evidence="1">
    <location>
        <position position="50"/>
    </location>
    <ligand>
        <name>substrate</name>
    </ligand>
</feature>
<feature type="binding site" evidence="1">
    <location>
        <position position="137"/>
    </location>
    <ligand>
        <name>substrate</name>
    </ligand>
</feature>
<feature type="binding site" evidence="1">
    <location>
        <position position="149"/>
    </location>
    <ligand>
        <name>substrate</name>
    </ligand>
</feature>
<feature type="binding site" evidence="1">
    <location>
        <begin position="169"/>
        <end position="170"/>
    </location>
    <ligand>
        <name>ATP</name>
        <dbReference type="ChEBI" id="CHEBI:30616"/>
    </ligand>
</feature>
<feature type="binding site" evidence="1">
    <location>
        <begin position="211"/>
        <end position="217"/>
    </location>
    <ligand>
        <name>ATP</name>
        <dbReference type="ChEBI" id="CHEBI:30616"/>
    </ligand>
</feature>
<keyword id="KW-0028">Amino-acid biosynthesis</keyword>
<keyword id="KW-0067">ATP-binding</keyword>
<keyword id="KW-0963">Cytoplasm</keyword>
<keyword id="KW-0418">Kinase</keyword>
<keyword id="KW-0547">Nucleotide-binding</keyword>
<keyword id="KW-0641">Proline biosynthesis</keyword>
<keyword id="KW-0808">Transferase</keyword>
<reference key="1">
    <citation type="journal article" date="2011" name="J. Bacteriol.">
        <title>Comparative genomics of 28 Salmonella enterica isolates: evidence for CRISPR-mediated adaptive sublineage evolution.</title>
        <authorList>
            <person name="Fricke W.F."/>
            <person name="Mammel M.K."/>
            <person name="McDermott P.F."/>
            <person name="Tartera C."/>
            <person name="White D.G."/>
            <person name="Leclerc J.E."/>
            <person name="Ravel J."/>
            <person name="Cebula T.A."/>
        </authorList>
    </citation>
    <scope>NUCLEOTIDE SEQUENCE [LARGE SCALE GENOMIC DNA]</scope>
    <source>
        <strain>CVM19633</strain>
    </source>
</reference>